<sequence length="492" mass="55481">MRDMGRSDIVISAVDALDIHIAMTSNACDKYPAKQHARRVAVKLGVSTGLVYLAGQPTVNWGDSDQPRPFRQRRYFYYLSGVDEADCYVTYDIRNDLLTLYVPDFDLHRAVWMGPTLTVEEARERYDVDQVRYYASLQGDVQRWVDKYNQSSPLYILHDTQRPRVSSNEVRFDDESLLPAMDATRGVKDEHEIRMIREANRISGLAHRRVLENIHRMSNEAEIEGLFLNTCISHRAKNQAYELIAGSGENAAVLHYVKNNEPLRGRQLVCLDAGAEWNCYASDVTRTFPLGTDWPSAEARHIYQLVEEMQEECIKRIQKGVRFIDLQVLAHVIAIEGLMRLGILRGGSVEEIRESGASTVFFPHGLGHHVGLEVHDVSAKDLRASDADRDYYNSVLTPSTSHGPCTLSAPALEEGMVVTVEPGIYFSRLALANARKLPYAKYIDFNEAEKYIPIGGVRIEDDILVTSSGYENLTTAPKGEAMLEIIRRGIDN</sequence>
<protein>
    <recommendedName>
        <fullName>Probable Xaa-Pro aminopeptidase ACLA_020440</fullName>
        <ecNumber>3.4.11.9</ecNumber>
    </recommendedName>
    <alternativeName>
        <fullName>Aminoacylproline aminopeptidase</fullName>
    </alternativeName>
    <alternativeName>
        <fullName>Prolidase</fullName>
    </alternativeName>
</protein>
<proteinExistence type="inferred from homology"/>
<name>AMPP2_ASPCL</name>
<organism>
    <name type="scientific">Aspergillus clavatus (strain ATCC 1007 / CBS 513.65 / DSM 816 / NCTC 3887 / NRRL 1 / QM 1276 / 107)</name>
    <dbReference type="NCBI Taxonomy" id="344612"/>
    <lineage>
        <taxon>Eukaryota</taxon>
        <taxon>Fungi</taxon>
        <taxon>Dikarya</taxon>
        <taxon>Ascomycota</taxon>
        <taxon>Pezizomycotina</taxon>
        <taxon>Eurotiomycetes</taxon>
        <taxon>Eurotiomycetidae</taxon>
        <taxon>Eurotiales</taxon>
        <taxon>Aspergillaceae</taxon>
        <taxon>Aspergillus</taxon>
        <taxon>Aspergillus subgen. Fumigati</taxon>
    </lineage>
</organism>
<gene>
    <name type="ORF">ACLA_020440</name>
</gene>
<evidence type="ECO:0000250" key="1"/>
<evidence type="ECO:0000305" key="2"/>
<reference key="1">
    <citation type="journal article" date="2008" name="PLoS Genet.">
        <title>Genomic islands in the pathogenic filamentous fungus Aspergillus fumigatus.</title>
        <authorList>
            <person name="Fedorova N.D."/>
            <person name="Khaldi N."/>
            <person name="Joardar V.S."/>
            <person name="Maiti R."/>
            <person name="Amedeo P."/>
            <person name="Anderson M.J."/>
            <person name="Crabtree J."/>
            <person name="Silva J.C."/>
            <person name="Badger J.H."/>
            <person name="Albarraq A."/>
            <person name="Angiuoli S."/>
            <person name="Bussey H."/>
            <person name="Bowyer P."/>
            <person name="Cotty P.J."/>
            <person name="Dyer P.S."/>
            <person name="Egan A."/>
            <person name="Galens K."/>
            <person name="Fraser-Liggett C.M."/>
            <person name="Haas B.J."/>
            <person name="Inman J.M."/>
            <person name="Kent R."/>
            <person name="Lemieux S."/>
            <person name="Malavazi I."/>
            <person name="Orvis J."/>
            <person name="Roemer T."/>
            <person name="Ronning C.M."/>
            <person name="Sundaram J.P."/>
            <person name="Sutton G."/>
            <person name="Turner G."/>
            <person name="Venter J.C."/>
            <person name="White O.R."/>
            <person name="Whitty B.R."/>
            <person name="Youngman P."/>
            <person name="Wolfe K.H."/>
            <person name="Goldman G.H."/>
            <person name="Wortman J.R."/>
            <person name="Jiang B."/>
            <person name="Denning D.W."/>
            <person name="Nierman W.C."/>
        </authorList>
    </citation>
    <scope>NUCLEOTIDE SEQUENCE [LARGE SCALE GENOMIC DNA]</scope>
    <source>
        <strain>ATCC 1007 / CBS 513.65 / DSM 816 / NCTC 3887 / NRRL 1 / QM 1276 / 107</strain>
    </source>
</reference>
<accession>A1CNW6</accession>
<keyword id="KW-0031">Aminopeptidase</keyword>
<keyword id="KW-0378">Hydrolase</keyword>
<keyword id="KW-0464">Manganese</keyword>
<keyword id="KW-0479">Metal-binding</keyword>
<keyword id="KW-0482">Metalloprotease</keyword>
<keyword id="KW-0645">Protease</keyword>
<keyword id="KW-1185">Reference proteome</keyword>
<feature type="chain" id="PRO_0000411823" description="Probable Xaa-Pro aminopeptidase ACLA_020440">
    <location>
        <begin position="1"/>
        <end position="492"/>
    </location>
</feature>
<feature type="binding site" evidence="1">
    <location>
        <position position="272"/>
    </location>
    <ligand>
        <name>Mn(2+)</name>
        <dbReference type="ChEBI" id="CHEBI:29035"/>
        <label>2</label>
    </ligand>
</feature>
<feature type="binding site" evidence="1">
    <location>
        <position position="283"/>
    </location>
    <ligand>
        <name>Mn(2+)</name>
        <dbReference type="ChEBI" id="CHEBI:29035"/>
        <label>1</label>
    </ligand>
</feature>
<feature type="binding site" evidence="1">
    <location>
        <position position="283"/>
    </location>
    <ligand>
        <name>Mn(2+)</name>
        <dbReference type="ChEBI" id="CHEBI:29035"/>
        <label>2</label>
    </ligand>
</feature>
<feature type="binding site" evidence="1">
    <location>
        <position position="421"/>
    </location>
    <ligand>
        <name>Mn(2+)</name>
        <dbReference type="ChEBI" id="CHEBI:29035"/>
        <label>1</label>
    </ligand>
</feature>
<feature type="binding site" evidence="1">
    <location>
        <position position="460"/>
    </location>
    <ligand>
        <name>Mn(2+)</name>
        <dbReference type="ChEBI" id="CHEBI:29035"/>
        <label>1</label>
    </ligand>
</feature>
<feature type="binding site" evidence="1">
    <location>
        <position position="460"/>
    </location>
    <ligand>
        <name>Mn(2+)</name>
        <dbReference type="ChEBI" id="CHEBI:29035"/>
        <label>2</label>
    </ligand>
</feature>
<comment type="function">
    <text evidence="1">Catalyzes the removal of a penultimate prolyl residue from the N-termini of peptides.</text>
</comment>
<comment type="catalytic activity">
    <reaction>
        <text>Release of any N-terminal amino acid, including proline, that is linked to proline, even from a dipeptide or tripeptide.</text>
        <dbReference type="EC" id="3.4.11.9"/>
    </reaction>
</comment>
<comment type="cofactor">
    <cofactor evidence="1">
        <name>Mn(2+)</name>
        <dbReference type="ChEBI" id="CHEBI:29035"/>
    </cofactor>
    <text evidence="1">Binds 2 manganese ions per subunit.</text>
</comment>
<comment type="similarity">
    <text evidence="2">Belongs to the peptidase M24B family.</text>
</comment>
<dbReference type="EC" id="3.4.11.9"/>
<dbReference type="EMBL" id="DS027059">
    <property type="protein sequence ID" value="EAW07337.1"/>
    <property type="molecule type" value="Genomic_DNA"/>
</dbReference>
<dbReference type="RefSeq" id="XP_001268763.1">
    <property type="nucleotide sequence ID" value="XM_001268762.1"/>
</dbReference>
<dbReference type="SMR" id="A1CNW6"/>
<dbReference type="STRING" id="344612.A1CNW6"/>
<dbReference type="EnsemblFungi" id="EAW07337">
    <property type="protein sequence ID" value="EAW07337"/>
    <property type="gene ID" value="ACLA_020440"/>
</dbReference>
<dbReference type="GeneID" id="4701445"/>
<dbReference type="KEGG" id="act:ACLA_020440"/>
<dbReference type="VEuPathDB" id="FungiDB:ACLA_020440"/>
<dbReference type="eggNOG" id="KOG2737">
    <property type="taxonomic scope" value="Eukaryota"/>
</dbReference>
<dbReference type="HOGENOM" id="CLU_017266_1_2_1"/>
<dbReference type="OMA" id="YELRMIR"/>
<dbReference type="OrthoDB" id="10261878at2759"/>
<dbReference type="Proteomes" id="UP000006701">
    <property type="component" value="Unassembled WGS sequence"/>
</dbReference>
<dbReference type="GO" id="GO:0030145">
    <property type="term" value="F:manganese ion binding"/>
    <property type="evidence" value="ECO:0007669"/>
    <property type="project" value="InterPro"/>
</dbReference>
<dbReference type="GO" id="GO:0070006">
    <property type="term" value="F:metalloaminopeptidase activity"/>
    <property type="evidence" value="ECO:0007669"/>
    <property type="project" value="InterPro"/>
</dbReference>
<dbReference type="GO" id="GO:0006508">
    <property type="term" value="P:proteolysis"/>
    <property type="evidence" value="ECO:0007669"/>
    <property type="project" value="UniProtKB-KW"/>
</dbReference>
<dbReference type="CDD" id="cd01087">
    <property type="entry name" value="Prolidase"/>
    <property type="match status" value="1"/>
</dbReference>
<dbReference type="Gene3D" id="3.90.230.10">
    <property type="entry name" value="Creatinase/methionine aminopeptidase superfamily"/>
    <property type="match status" value="1"/>
</dbReference>
<dbReference type="Gene3D" id="3.40.350.10">
    <property type="entry name" value="Creatinase/prolidase N-terminal domain"/>
    <property type="match status" value="1"/>
</dbReference>
<dbReference type="InterPro" id="IPR007865">
    <property type="entry name" value="Aminopep_P_N"/>
</dbReference>
<dbReference type="InterPro" id="IPR029149">
    <property type="entry name" value="Creatin/AminoP/Spt16_N"/>
</dbReference>
<dbReference type="InterPro" id="IPR036005">
    <property type="entry name" value="Creatinase/aminopeptidase-like"/>
</dbReference>
<dbReference type="InterPro" id="IPR000994">
    <property type="entry name" value="Pept_M24"/>
</dbReference>
<dbReference type="InterPro" id="IPR001131">
    <property type="entry name" value="Peptidase_M24B_aminopep-P_CS"/>
</dbReference>
<dbReference type="InterPro" id="IPR052433">
    <property type="entry name" value="X-Pro_dipept-like"/>
</dbReference>
<dbReference type="PANTHER" id="PTHR43226">
    <property type="entry name" value="XAA-PRO AMINOPEPTIDASE 3"/>
    <property type="match status" value="1"/>
</dbReference>
<dbReference type="PANTHER" id="PTHR43226:SF3">
    <property type="entry name" value="XAA-PRO AMINOPEPTIDASE AN0832-RELATED"/>
    <property type="match status" value="1"/>
</dbReference>
<dbReference type="Pfam" id="PF05195">
    <property type="entry name" value="AMP_N"/>
    <property type="match status" value="1"/>
</dbReference>
<dbReference type="Pfam" id="PF00557">
    <property type="entry name" value="Peptidase_M24"/>
    <property type="match status" value="1"/>
</dbReference>
<dbReference type="SMART" id="SM01011">
    <property type="entry name" value="AMP_N"/>
    <property type="match status" value="1"/>
</dbReference>
<dbReference type="SUPFAM" id="SSF55920">
    <property type="entry name" value="Creatinase/aminopeptidase"/>
    <property type="match status" value="1"/>
</dbReference>
<dbReference type="SUPFAM" id="SSF53092">
    <property type="entry name" value="Creatinase/prolidase N-terminal domain"/>
    <property type="match status" value="1"/>
</dbReference>
<dbReference type="PROSITE" id="PS00491">
    <property type="entry name" value="PROLINE_PEPTIDASE"/>
    <property type="match status" value="1"/>
</dbReference>